<dbReference type="EMBL" id="X60546">
    <property type="protein sequence ID" value="CAA43036.1"/>
    <property type="molecule type" value="mRNA"/>
</dbReference>
<dbReference type="PIR" id="A48357">
    <property type="entry name" value="A48357"/>
</dbReference>
<dbReference type="Proteomes" id="UP000008175">
    <property type="component" value="Genome"/>
</dbReference>
<dbReference type="GO" id="GO:0030430">
    <property type="term" value="C:host cell cytoplasm"/>
    <property type="evidence" value="ECO:0007669"/>
    <property type="project" value="UniProtKB-UniRule"/>
</dbReference>
<dbReference type="GO" id="GO:0044163">
    <property type="term" value="C:host cytoskeleton"/>
    <property type="evidence" value="ECO:0007669"/>
    <property type="project" value="UniProtKB-SubCell"/>
</dbReference>
<dbReference type="GO" id="GO:0046872">
    <property type="term" value="F:metal ion binding"/>
    <property type="evidence" value="ECO:0007669"/>
    <property type="project" value="UniProtKB-UniRule"/>
</dbReference>
<dbReference type="GO" id="GO:0003723">
    <property type="term" value="F:RNA binding"/>
    <property type="evidence" value="ECO:0007669"/>
    <property type="project" value="UniProtKB-UniRule"/>
</dbReference>
<dbReference type="GO" id="GO:0039548">
    <property type="term" value="P:symbiont-mediated suppression of host cytoplasmic pattern recognition receptor signaling pathway via inhibition of IRF3 activity"/>
    <property type="evidence" value="ECO:0007669"/>
    <property type="project" value="UniProtKB-UniRule"/>
</dbReference>
<dbReference type="GO" id="GO:0039557">
    <property type="term" value="P:symbiont-mediated suppression of host cytoplasmic pattern recognition receptor signaling pathway via inhibition of IRF7 activity"/>
    <property type="evidence" value="ECO:0007669"/>
    <property type="project" value="UniProtKB-UniRule"/>
</dbReference>
<dbReference type="HAMAP" id="MF_04088">
    <property type="entry name" value="ROTA_NSP1"/>
    <property type="match status" value="1"/>
</dbReference>
<dbReference type="InterPro" id="IPR002148">
    <property type="entry name" value="Rotavirus_NSP1"/>
</dbReference>
<sequence length="393" mass="46438">MANSYREMLYWFGKTIDRNLPYVNTNGWRKQKGRKDGICLNCLDECKLYSCDHCGIKHKCGNCVLSECFLDVKNEFNKYRWLVFDEEPDQAVLLQHWIMYKDYFLQKFNYRLATQAKILNMNKNQKFQLNEGRKRALSVPITSQFLKFRLFGKIYIQFGTIMTNKIQPWLELSTLKIGYLQLLNVERCSELMATRGQFTTNVAKTACITEIKCRRPIYDNDCIIEAYLDKNDRGWKFAAILGRRKIPVTQKLAMEYFMKSLRAELFYYAHSRCHTLSNCPRWNEGLRLLNSSTLNIVFRRQFMNEIVEWFEIFSQYTGSHYEFITECVHDKSAITAFKQEIEDYIKEGKQITLKSVVPEEHAAYRHILRLRESLMLAIDAALSRIRSQSMGVL</sequence>
<organismHost>
    <name type="scientific">Sus scrofa</name>
    <name type="common">Pig</name>
    <dbReference type="NCBI Taxonomy" id="9823"/>
</organismHost>
<accession>Q00033</accession>
<evidence type="ECO:0000255" key="1">
    <source>
        <dbReference type="HAMAP-Rule" id="MF_04088"/>
    </source>
</evidence>
<feature type="chain" id="PRO_0000149560" description="Non-structural protein 1">
    <location>
        <begin position="1"/>
        <end position="393"/>
    </location>
</feature>
<feature type="region of interest" description="RNA-binding" evidence="1">
    <location>
        <begin position="2"/>
        <end position="79"/>
    </location>
</feature>
<feature type="region of interest" description="Zinc-binding domain" evidence="1">
    <location>
        <begin position="39"/>
        <end position="77"/>
    </location>
</feature>
<feature type="region of interest" description="Important for cytoskeleton localization" evidence="1">
    <location>
        <begin position="80"/>
        <end position="170"/>
    </location>
</feature>
<feature type="region of interest" description="Interaction with host IRF3" evidence="1">
    <location>
        <begin position="267"/>
        <end position="393"/>
    </location>
</feature>
<proteinExistence type="evidence at transcript level"/>
<name>NSP1_ROTPC</name>
<comment type="function">
    <text evidence="1">Plays a role in the inhibition of host innate immunity by inducing the degradation of key host factors required to activate interferon production such as IRF3, IRF5 or IRF7. Associates with components of cullin RING ligases (CRLs) including CUL1 or CUL3, which are essential multisubunit ubiquitination complexes, to modulate their activities.</text>
</comment>
<comment type="subunit">
    <text evidence="1">Interacts (via C-terminus) with host IRF3; this interaction leads to IRF3 degradation. Interacts with host IRF7; this interaction leads to IRF7 degradation. Interacts with host CUL1 and CUL3.</text>
</comment>
<comment type="subcellular location">
    <subcellularLocation>
        <location evidence="1">Host cytoplasm</location>
        <location evidence="1">Host cytoskeleton</location>
    </subcellularLocation>
</comment>
<comment type="domain">
    <text evidence="1">The integrity of the zinc-binding domain in NSP1 is important for degradation of host IRF3.</text>
</comment>
<comment type="similarity">
    <text evidence="1">Belongs to the rotavirus NSP1 family.</text>
</comment>
<keyword id="KW-1035">Host cytoplasm</keyword>
<keyword id="KW-1037">Host cytoskeleton</keyword>
<keyword id="KW-0945">Host-virus interaction</keyword>
<keyword id="KW-1090">Inhibition of host innate immune response by virus</keyword>
<keyword id="KW-1092">Inhibition of host IRF3 by virus</keyword>
<keyword id="KW-1093">Inhibition of host IRF7 by virus</keyword>
<keyword id="KW-1113">Inhibition of host RLR pathway by virus</keyword>
<keyword id="KW-0922">Interferon antiviral system evasion</keyword>
<keyword id="KW-0479">Metal-binding</keyword>
<keyword id="KW-0694">RNA-binding</keyword>
<keyword id="KW-0899">Viral immunoevasion</keyword>
<protein>
    <recommendedName>
        <fullName evidence="1">Non-structural protein 1</fullName>
        <shortName evidence="1">NSP1</shortName>
    </recommendedName>
    <alternativeName>
        <fullName evidence="1">NCVP2</fullName>
    </alternativeName>
    <alternativeName>
        <fullName evidence="1">Non-structural RNA-binding protein 53</fullName>
        <shortName evidence="1">NS53</shortName>
    </alternativeName>
</protein>
<reference key="1">
    <citation type="journal article" date="1993" name="Arch. Virol.">
        <title>Sequence analysis of three non structural proteins of a porcine group C (Cowden strain) rotavirus.</title>
        <authorList>
            <person name="Bremont M."/>
            <person name="Chabanne-Vautherot D."/>
            <person name="Cohen J."/>
        </authorList>
    </citation>
    <scope>NUCLEOTIDE SEQUENCE [MRNA]</scope>
</reference>
<organism>
    <name type="scientific">Rotavirus C (strain RVC/Pig/United States/Cowden/1980)</name>
    <name type="common">RV-C</name>
    <dbReference type="NCBI Taxonomy" id="10916"/>
    <lineage>
        <taxon>Viruses</taxon>
        <taxon>Riboviria</taxon>
        <taxon>Orthornavirae</taxon>
        <taxon>Duplornaviricota</taxon>
        <taxon>Resentoviricetes</taxon>
        <taxon>Reovirales</taxon>
        <taxon>Sedoreoviridae</taxon>
        <taxon>Rotavirus</taxon>
        <taxon>Rotavirus C</taxon>
    </lineage>
</organism>